<reference key="1">
    <citation type="journal article" date="2003" name="J. Bacteriol.">
        <title>Characterization of a spontaneous nonmagnetic mutant of Magnetospirillum gryphiswaldense reveals a large deletion comprising a putative magnetosome island.</title>
        <authorList>
            <person name="Schuebbe S."/>
            <person name="Kube M."/>
            <person name="Scheffel A."/>
            <person name="Wawer C."/>
            <person name="Heyen U."/>
            <person name="Meyerdierks A."/>
            <person name="Madkour M.H."/>
            <person name="Mayer F."/>
            <person name="Reinhardt R."/>
            <person name="Schueler D."/>
        </authorList>
    </citation>
    <scope>NUCLEOTIDE SEQUENCE [GENOMIC DNA]</scope>
    <scope>PROBABLE OPERON</scope>
    <scope>DISRUPTION PHENOTYPE</scope>
    <source>
        <strain>DSM 6361 / JCM 21280 / NBRC 15271 / MSR-1</strain>
    </source>
</reference>
<reference key="2">
    <citation type="journal article" date="2005" name="J. Bacteriol.">
        <title>A hypervariable 130-kilobase genomic region of Magnetospirillum gryphiswaldense comprises a magnetosome island which undergoes frequent rearrangements during stationary growth.</title>
        <authorList>
            <person name="Ullrich S."/>
            <person name="Kube M."/>
            <person name="Schuebbe S."/>
            <person name="Reinhardt R."/>
            <person name="Schueler D."/>
        </authorList>
    </citation>
    <scope>NUCLEOTIDE SEQUENCE [GENOMIC DNA]</scope>
    <source>
        <strain>DSM 6361 / JCM 21280 / NBRC 15271 / MSR-1</strain>
    </source>
</reference>
<reference key="3">
    <citation type="journal article" date="2007" name="J. Bacteriol.">
        <title>Comparative genome analysis of four magnetotactic bacteria reveals a complex set of group-specific genes implicated in magnetosome biomineralization and function.</title>
        <authorList>
            <person name="Richter M."/>
            <person name="Kube M."/>
            <person name="Bazylinski D.A."/>
            <person name="Lombardot T."/>
            <person name="Gloeckner F.O."/>
            <person name="Reinhardt R."/>
            <person name="Schueler D."/>
        </authorList>
    </citation>
    <scope>NUCLEOTIDE SEQUENCE [LARGE SCALE GENOMIC DNA]</scope>
    <source>
        <strain>DSM 6361 / JCM 21280 / NBRC 15271 / MSR-1</strain>
    </source>
</reference>
<reference key="4">
    <citation type="journal article" date="2014" name="Genome Announc.">
        <title>Complete genome sequence of Magnetospirillum gryphiswaldense MSR-1.</title>
        <authorList>
            <person name="Wang X."/>
            <person name="Wang Q."/>
            <person name="Zhang W."/>
            <person name="Wang Y."/>
            <person name="Li L."/>
            <person name="Wen T."/>
            <person name="Zhang T."/>
            <person name="Zhang Y."/>
            <person name="Xu J."/>
            <person name="Hu J."/>
            <person name="Li S."/>
            <person name="Liu L."/>
            <person name="Liu J."/>
            <person name="Jiang W."/>
            <person name="Tian J."/>
            <person name="Li Y."/>
            <person name="Schuler D."/>
            <person name="Wang L."/>
            <person name="Li J."/>
        </authorList>
    </citation>
    <scope>NUCLEOTIDE SEQUENCE [LARGE SCALE GENOMIC DNA]</scope>
    <source>
        <strain>DSM 6361 / JCM 21280 / NBRC 15271 / MSR-1</strain>
    </source>
</reference>
<reference key="5">
    <citation type="journal article" date="2011" name="PLoS ONE">
        <title>Functional analysis of the magnetosome island in Magnetospirillum gryphiswaldense: the mamAB operon is sufficient for magnetite biomineralization.</title>
        <authorList>
            <person name="Lohsse A."/>
            <person name="Ullrich S."/>
            <person name="Katzmann E."/>
            <person name="Borg S."/>
            <person name="Wanner G."/>
            <person name="Richter M."/>
            <person name="Voigt B."/>
            <person name="Schweder T."/>
            <person name="Schueler D."/>
        </authorList>
    </citation>
    <scope>MINIMAL MAGNETOSOME ISLAND</scope>
    <source>
        <strain>DSM 6361 / JCM 21280 / NBRC 15271 / MSR-1</strain>
    </source>
</reference>
<reference key="6">
    <citation type="journal article" date="2014" name="J. Bacteriol.">
        <title>Genetic dissection of the mamAB and mms6 operons reveals a gene set essential for magnetosome biogenesis in Magnetospirillum gryphiswaldense.</title>
        <authorList>
            <person name="Lohsse A."/>
            <person name="Borg S."/>
            <person name="Raschdorf O."/>
            <person name="Kolinko I."/>
            <person name="Tompa E."/>
            <person name="Posfai M."/>
            <person name="Faivre D."/>
            <person name="Baumgartner J."/>
            <person name="Schueler D."/>
        </authorList>
    </citation>
    <scope>SEQUENCE REVISION TO N-TERMINUS</scope>
    <scope>DISRUPTION PHENOTYPE</scope>
    <source>
        <strain>DSM 6361 / JCM 21280 / NBRC 15271 / MSR-1</strain>
    </source>
</reference>
<reference key="7">
    <citation type="journal article" date="2016" name="PLoS Genet.">
        <title>Genetic and Ultrastructural Analysis Reveals the Key Players and Initial Steps of Bacterial Magnetosome Membrane Biogenesis.</title>
        <authorList>
            <person name="Raschdorf O."/>
            <person name="Forstner Y."/>
            <person name="Kolinko I."/>
            <person name="Uebe R."/>
            <person name="Plitzko J.M."/>
            <person name="Schueler D."/>
        </authorList>
    </citation>
    <scope>FUNCTION</scope>
    <scope>MINIMAL VESICLE FORMATION GENES</scope>
    <scope>SUBCELLULAR LOCATION</scope>
    <scope>DISRUPTION PHENOTYPE</scope>
    <source>
        <strain>DSM 6361 / JCM 21280 / NBRC 15271 / MSR-1</strain>
    </source>
</reference>
<evidence type="ECO:0000250" key="1">
    <source>
        <dbReference type="UniProtKB" id="Q2W8Q9"/>
    </source>
</evidence>
<evidence type="ECO:0000255" key="2"/>
<evidence type="ECO:0000269" key="3">
    <source>
    </source>
</evidence>
<evidence type="ECO:0000269" key="4">
    <source>
    </source>
</evidence>
<evidence type="ECO:0000269" key="5">
    <source>
    </source>
</evidence>
<evidence type="ECO:0000269" key="6">
    <source>
    </source>
</evidence>
<evidence type="ECO:0000303" key="7">
    <source>
    </source>
</evidence>
<evidence type="ECO:0000305" key="8"/>
<evidence type="ECO:0000305" key="9">
    <source>
    </source>
</evidence>
<evidence type="ECO:0000305" key="10">
    <source>
    </source>
</evidence>
<feature type="chain" id="PRO_0000447801" description="Magnetosome protein MamI">
    <location>
        <begin position="1"/>
        <end position="69"/>
    </location>
</feature>
<feature type="topological domain" description="Cytoplasmic" evidence="8">
    <location>
        <begin position="1"/>
        <end position="2"/>
    </location>
</feature>
<feature type="transmembrane region" description="Helical" evidence="2">
    <location>
        <begin position="3"/>
        <end position="23"/>
    </location>
</feature>
<feature type="topological domain" description="Lumenal" evidence="8">
    <location>
        <begin position="24"/>
        <end position="31"/>
    </location>
</feature>
<feature type="transmembrane region" description="Helical" evidence="2">
    <location>
        <begin position="32"/>
        <end position="52"/>
    </location>
</feature>
<feature type="topological domain" description="Cytoplasmic" evidence="8">
    <location>
        <begin position="53"/>
        <end position="69"/>
    </location>
</feature>
<comment type="function">
    <text evidence="1 6 10">May be involved in an early stage of magnetosome nucleation (Probable). Not essential for formation of magnetosome membrane vesicles, it is probably functionally redundant with other proteins (PubMed:27286560). May bind magnetite (By similarity). One of 7 genes (mamLQBIEMO) able to induce magnetosome membrane biogenesis; coexpression of mamLQRBIEMO in a deletion of the 17 gene mamAB operon restores magnetosome vesicle formation but not magnetite biosynthesis (PubMed:27286560).</text>
</comment>
<comment type="subcellular location">
    <subcellularLocation>
        <location evidence="6">Magnetosome membrane</location>
        <topology evidence="2">Multi-pass membrane protein</topology>
    </subcellularLocation>
    <text evidence="6">Tagged protein is found in punctate chains.</text>
</comment>
<comment type="induction">
    <text evidence="9">Part of the probable 17 gene mamAB operon.</text>
</comment>
<comment type="disruption phenotype">
    <text evidence="3 5 6">No magnetic response, fewer, smaller magnetosomes which do not contain magnetite. MamC localizes at mid cell in a short chain (PubMed:24816605). Magnetosome vesicles are approximately wild-type in size, shape and chain-like alignment, but there are many fewer vesicles, only a few have crystals (PubMed:27286560). Deletion of approximately 80 kb of DNA, including this operon, leads to cells that are non-magnetic, lack internal membrane systems, grow poorly, have reduced mobility and take-up and accumulate iron poorly (PubMed:13129949).</text>
</comment>
<comment type="miscellaneous">
    <text evidence="9">This bacteria makes up to 60 cubo-octahedral magnetosomes of about 45 nm in diameter which contain membrane-bound crystals of magnetite (Fe(3)O(4)).</text>
</comment>
<comment type="miscellaneous">
    <text evidence="4">Expression of just the minimal mamAB gene cluster (MGMSRv2__2365 to MGMSRv2__2381), including this gene, is sufficient to form a minimal magnetosome chain with small magnetite particles.</text>
</comment>
<comment type="similarity">
    <text evidence="8">Belongs to the magnetosome MamI protein family.</text>
</comment>
<comment type="sequence caution" evidence="10">
    <conflict type="erroneous initiation">
        <sequence resource="EMBL-CDS" id="CAE12031"/>
    </conflict>
    <text>Extended N-terminus.</text>
</comment>
<comment type="sequence caution" evidence="10">
    <conflict type="erroneous initiation">
        <sequence resource="EMBL-CDS" id="CAJ30115"/>
    </conflict>
    <text>Extended N-terminus.</text>
</comment>
<comment type="sequence caution" evidence="10">
    <conflict type="erroneous initiation">
        <sequence resource="EMBL-CDS" id="CAM78022"/>
    </conflict>
    <text>Extended N-terminus.</text>
</comment>
<protein>
    <recommendedName>
        <fullName evidence="8">Magnetosome protein MamI</fullName>
    </recommendedName>
</protein>
<keyword id="KW-0091">Biomineralization</keyword>
<keyword id="KW-0408">Iron</keyword>
<keyword id="KW-1281">Magnetosome</keyword>
<keyword id="KW-0472">Membrane</keyword>
<keyword id="KW-0479">Metal-binding</keyword>
<keyword id="KW-1185">Reference proteome</keyword>
<keyword id="KW-0812">Transmembrane</keyword>
<keyword id="KW-1133">Transmembrane helix</keyword>
<organism>
    <name type="scientific">Magnetospirillum gryphiswaldense (strain DSM 6361 / JCM 21280 / NBRC 15271 / MSR-1)</name>
    <dbReference type="NCBI Taxonomy" id="431944"/>
    <lineage>
        <taxon>Bacteria</taxon>
        <taxon>Pseudomonadati</taxon>
        <taxon>Pseudomonadota</taxon>
        <taxon>Alphaproteobacteria</taxon>
        <taxon>Rhodospirillales</taxon>
        <taxon>Rhodospirillaceae</taxon>
        <taxon>Magnetospirillum</taxon>
    </lineage>
</organism>
<dbReference type="EMBL" id="BX571797">
    <property type="protein sequence ID" value="CAE12031.1"/>
    <property type="status" value="ALT_INIT"/>
    <property type="molecule type" value="Genomic_DNA"/>
</dbReference>
<dbReference type="EMBL" id="AM085146">
    <property type="protein sequence ID" value="CAJ30115.1"/>
    <property type="status" value="ALT_INIT"/>
    <property type="molecule type" value="Genomic_DNA"/>
</dbReference>
<dbReference type="EMBL" id="CU459003">
    <property type="protein sequence ID" value="CAM78022.1"/>
    <property type="status" value="ALT_INIT"/>
    <property type="molecule type" value="Genomic_DNA"/>
</dbReference>
<dbReference type="EMBL" id="HG794546">
    <property type="protein sequence ID" value="CDK99595.1"/>
    <property type="molecule type" value="Genomic_DNA"/>
</dbReference>
<dbReference type="RefSeq" id="WP_024080591.1">
    <property type="nucleotide sequence ID" value="NZ_CP027526.1"/>
</dbReference>
<dbReference type="SMR" id="Q6NE62"/>
<dbReference type="STRING" id="1430440.MGMSRv2__2380"/>
<dbReference type="KEGG" id="mgry:MSR1_03350"/>
<dbReference type="KEGG" id="mgy:MGMSRv2__2380"/>
<dbReference type="eggNOG" id="ENOG502ZSFF">
    <property type="taxonomic scope" value="Bacteria"/>
</dbReference>
<dbReference type="HOGENOM" id="CLU_2788987_0_0_5"/>
<dbReference type="OrthoDB" id="7365616at2"/>
<dbReference type="Proteomes" id="UP000018922">
    <property type="component" value="Chromosome I"/>
</dbReference>
<dbReference type="GO" id="GO:0110146">
    <property type="term" value="C:magnetosome membrane"/>
    <property type="evidence" value="ECO:0000250"/>
    <property type="project" value="UniProtKB"/>
</dbReference>
<dbReference type="GO" id="GO:0046872">
    <property type="term" value="F:metal ion binding"/>
    <property type="evidence" value="ECO:0007669"/>
    <property type="project" value="UniProtKB-KW"/>
</dbReference>
<dbReference type="NCBIfam" id="NF040963">
    <property type="entry name" value="MamI"/>
    <property type="match status" value="1"/>
</dbReference>
<accession>Q6NE62</accession>
<accession>V6F240</accession>
<sequence>MPSVIFGLLALAIGLLGLTAWWWSVTEFLRGAVPVALIIFGLVALAAGVQSVRVPPAGKRANSDPNIDG</sequence>
<gene>
    <name evidence="7" type="primary">mamI</name>
    <name type="ordered locus">MGMSRv2__2380</name>
    <name type="ORF">mgIa18</name>
    <name type="ORF">MGR_4090</name>
</gene>
<proteinExistence type="inferred from homology"/>
<name>MAMI_MAGGM</name>